<sequence length="466" mass="49856">MEKDSSIKKSRAIRRLVIWYKRNSAVTSIVDTAANSAVTASNVAGNVVSGAGSVVSTASNVAGNVAGNVVSSAESVVNTASNVVSSASSIAKNTLQPLVFDPLKRLQNSDNLISKEEVPNSERIWIAVDGMGGDYAPVPILEGCLGAISRFPINIKFVGKIEKVRYEAERVGLIDLLEKEIDNNRLELIDSGDPIGMNEEATAVRKRKDASINVAMDLVKTNKAKAVYSAGNSGALMASAIFRIGRLKGIERPAIGALFPTRDQTRPVLVLDVGANTDCKPSYLHQFALLGNVYAKDVLQIEKPRIGLLNIGEEECKGNDLSIKTFELLSNEKSFNFGGNCEGRDVLSGDFDVVVCDGFTGNILLKFLESVGGVLLDILRSELPRGRRGKVGSAFLKSNLLRIKKRLDHAEHGGALLLGVNGICVIGHGSSKSLSVVSALRLAHSAVNHNVMENLNQLQKLQVLNS</sequence>
<evidence type="ECO:0000250" key="1"/>
<evidence type="ECO:0000305" key="2"/>
<feature type="chain" id="PRO_0000189921" description="Phosphate acyltransferase">
    <location>
        <begin position="1"/>
        <end position="466"/>
    </location>
</feature>
<feature type="region of interest" description="Unknown">
    <location>
        <begin position="1"/>
        <end position="122"/>
    </location>
</feature>
<feature type="region of interest" description="Phosphate acyltransferase">
    <location>
        <begin position="123"/>
        <end position="466"/>
    </location>
</feature>
<protein>
    <recommendedName>
        <fullName>Phosphate acyltransferase</fullName>
        <ecNumber>2.3.1.274</ecNumber>
    </recommendedName>
    <alternativeName>
        <fullName>Acyl-ACP phosphotransacylase</fullName>
    </alternativeName>
    <alternativeName>
        <fullName>Acyl-[acyl-carrier-protein]--phosphate acyltransferase</fullName>
    </alternativeName>
    <alternativeName>
        <fullName>Phosphate-acyl-ACP acyltransferase</fullName>
    </alternativeName>
</protein>
<organism>
    <name type="scientific">Prochlorococcus marinus subsp. pastoris (strain CCMP1986 / NIES-2087 / MED4)</name>
    <dbReference type="NCBI Taxonomy" id="59919"/>
    <lineage>
        <taxon>Bacteria</taxon>
        <taxon>Bacillati</taxon>
        <taxon>Cyanobacteriota</taxon>
        <taxon>Cyanophyceae</taxon>
        <taxon>Synechococcales</taxon>
        <taxon>Prochlorococcaceae</taxon>
        <taxon>Prochlorococcus</taxon>
    </lineage>
</organism>
<dbReference type="EC" id="2.3.1.274"/>
<dbReference type="EMBL" id="BX548174">
    <property type="protein sequence ID" value="CAE18594.1"/>
    <property type="molecule type" value="Genomic_DNA"/>
</dbReference>
<dbReference type="RefSeq" id="WP_011131774.1">
    <property type="nucleotide sequence ID" value="NC_005072.1"/>
</dbReference>
<dbReference type="SMR" id="Q7V3E1"/>
<dbReference type="STRING" id="59919.PMM0135"/>
<dbReference type="KEGG" id="pmm:PMM0135"/>
<dbReference type="eggNOG" id="COG0416">
    <property type="taxonomic scope" value="Bacteria"/>
</dbReference>
<dbReference type="HOGENOM" id="CLU_039379_0_0_3"/>
<dbReference type="OrthoDB" id="9806408at2"/>
<dbReference type="UniPathway" id="UPA00085"/>
<dbReference type="Proteomes" id="UP000001026">
    <property type="component" value="Chromosome"/>
</dbReference>
<dbReference type="GO" id="GO:0005737">
    <property type="term" value="C:cytoplasm"/>
    <property type="evidence" value="ECO:0007669"/>
    <property type="project" value="UniProtKB-SubCell"/>
</dbReference>
<dbReference type="GO" id="GO:0043811">
    <property type="term" value="F:phosphate:acyl-[acyl carrier protein] acyltransferase activity"/>
    <property type="evidence" value="ECO:0007669"/>
    <property type="project" value="UniProtKB-UniRule"/>
</dbReference>
<dbReference type="GO" id="GO:0006633">
    <property type="term" value="P:fatty acid biosynthetic process"/>
    <property type="evidence" value="ECO:0007669"/>
    <property type="project" value="UniProtKB-UniRule"/>
</dbReference>
<dbReference type="GO" id="GO:0008654">
    <property type="term" value="P:phospholipid biosynthetic process"/>
    <property type="evidence" value="ECO:0007669"/>
    <property type="project" value="UniProtKB-KW"/>
</dbReference>
<dbReference type="Gene3D" id="3.40.718.10">
    <property type="entry name" value="Isopropylmalate Dehydrogenase"/>
    <property type="match status" value="1"/>
</dbReference>
<dbReference type="HAMAP" id="MF_00019">
    <property type="entry name" value="PlsX"/>
    <property type="match status" value="1"/>
</dbReference>
<dbReference type="InterPro" id="IPR003664">
    <property type="entry name" value="FA_synthesis"/>
</dbReference>
<dbReference type="InterPro" id="IPR012281">
    <property type="entry name" value="Phospholipid_synth_PlsX-like"/>
</dbReference>
<dbReference type="NCBIfam" id="TIGR00182">
    <property type="entry name" value="plsX"/>
    <property type="match status" value="1"/>
</dbReference>
<dbReference type="NCBIfam" id="NF010419">
    <property type="entry name" value="PRK13845.1"/>
    <property type="match status" value="1"/>
</dbReference>
<dbReference type="PANTHER" id="PTHR30100">
    <property type="entry name" value="FATTY ACID/PHOSPHOLIPID SYNTHESIS PROTEIN PLSX"/>
    <property type="match status" value="1"/>
</dbReference>
<dbReference type="PANTHER" id="PTHR30100:SF1">
    <property type="entry name" value="PHOSPHATE ACYLTRANSFERASE"/>
    <property type="match status" value="1"/>
</dbReference>
<dbReference type="Pfam" id="PF02504">
    <property type="entry name" value="FA_synthesis"/>
    <property type="match status" value="1"/>
</dbReference>
<dbReference type="SUPFAM" id="SSF53659">
    <property type="entry name" value="Isocitrate/Isopropylmalate dehydrogenase-like"/>
    <property type="match status" value="1"/>
</dbReference>
<comment type="function">
    <text evidence="1">Catalyzes the reversible formation of acyl-phosphate (acyl-PO(4)) from acyl-[acyl-carrier-protein] (acyl-ACP). This enzyme utilizes acyl-ACP as fatty acyl donor, but not acyl-CoA (By similarity).</text>
</comment>
<comment type="catalytic activity">
    <reaction>
        <text>a fatty acyl-[ACP] + phosphate = an acyl phosphate + holo-[ACP]</text>
        <dbReference type="Rhea" id="RHEA:42292"/>
        <dbReference type="Rhea" id="RHEA-COMP:9685"/>
        <dbReference type="Rhea" id="RHEA-COMP:14125"/>
        <dbReference type="ChEBI" id="CHEBI:43474"/>
        <dbReference type="ChEBI" id="CHEBI:59918"/>
        <dbReference type="ChEBI" id="CHEBI:64479"/>
        <dbReference type="ChEBI" id="CHEBI:138651"/>
        <dbReference type="EC" id="2.3.1.274"/>
    </reaction>
</comment>
<comment type="pathway">
    <text>Lipid metabolism; phospholipid metabolism.</text>
</comment>
<comment type="subunit">
    <text evidence="1">Homodimer. Probably interacts with PlsY (By similarity).</text>
</comment>
<comment type="subcellular location">
    <subcellularLocation>
        <location evidence="1">Cytoplasm</location>
    </subcellularLocation>
    <text evidence="1">Associated with the membrane possibly through PlsY.</text>
</comment>
<comment type="similarity">
    <text evidence="2">Belongs to the PlsX family.</text>
</comment>
<gene>
    <name type="primary">plsX</name>
    <name type="ordered locus">PMM0135</name>
</gene>
<accession>Q7V3E1</accession>
<reference key="1">
    <citation type="journal article" date="2003" name="Nature">
        <title>Genome divergence in two Prochlorococcus ecotypes reflects oceanic niche differentiation.</title>
        <authorList>
            <person name="Rocap G."/>
            <person name="Larimer F.W."/>
            <person name="Lamerdin J.E."/>
            <person name="Malfatti S."/>
            <person name="Chain P."/>
            <person name="Ahlgren N.A."/>
            <person name="Arellano A."/>
            <person name="Coleman M."/>
            <person name="Hauser L."/>
            <person name="Hess W.R."/>
            <person name="Johnson Z.I."/>
            <person name="Land M.L."/>
            <person name="Lindell D."/>
            <person name="Post A.F."/>
            <person name="Regala W."/>
            <person name="Shah M."/>
            <person name="Shaw S.L."/>
            <person name="Steglich C."/>
            <person name="Sullivan M.B."/>
            <person name="Ting C.S."/>
            <person name="Tolonen A."/>
            <person name="Webb E.A."/>
            <person name="Zinser E.R."/>
            <person name="Chisholm S.W."/>
        </authorList>
    </citation>
    <scope>NUCLEOTIDE SEQUENCE [LARGE SCALE GENOMIC DNA]</scope>
    <source>
        <strain>CCMP1986 / NIES-2087 / MED4</strain>
    </source>
</reference>
<name>PLSX_PROMP</name>
<keyword id="KW-0963">Cytoplasm</keyword>
<keyword id="KW-0444">Lipid biosynthesis</keyword>
<keyword id="KW-0443">Lipid metabolism</keyword>
<keyword id="KW-0594">Phospholipid biosynthesis</keyword>
<keyword id="KW-1208">Phospholipid metabolism</keyword>
<keyword id="KW-0808">Transferase</keyword>
<proteinExistence type="inferred from homology"/>